<keyword id="KW-0472">Membrane</keyword>
<keyword id="KW-1185">Reference proteome</keyword>
<keyword id="KW-0812">Transmembrane</keyword>
<keyword id="KW-1133">Transmembrane helix</keyword>
<accession>A2Z6C5</accession>
<dbReference type="EMBL" id="CM000135">
    <property type="status" value="NOT_ANNOTATED_CDS"/>
    <property type="molecule type" value="Genomic_DNA"/>
</dbReference>
<dbReference type="SMR" id="A2Z6C5"/>
<dbReference type="STRING" id="39946.A2Z6C5"/>
<dbReference type="Proteomes" id="UP000007015">
    <property type="component" value="Chromosome 10"/>
</dbReference>
<dbReference type="GO" id="GO:0016020">
    <property type="term" value="C:membrane"/>
    <property type="evidence" value="ECO:0007669"/>
    <property type="project" value="UniProtKB-SubCell"/>
</dbReference>
<dbReference type="InterPro" id="IPR007749">
    <property type="entry name" value="DUF677"/>
</dbReference>
<dbReference type="PANTHER" id="PTHR31113">
    <property type="entry name" value="UPF0496 PROTEIN 3-RELATED"/>
    <property type="match status" value="1"/>
</dbReference>
<dbReference type="PANTHER" id="PTHR31113:SF21">
    <property type="entry name" value="UPF0496 PROTEIN 5-RELATED"/>
    <property type="match status" value="1"/>
</dbReference>
<dbReference type="Pfam" id="PF05055">
    <property type="entry name" value="DUF677"/>
    <property type="match status" value="1"/>
</dbReference>
<gene>
    <name type="ORF">OsI_032118</name>
</gene>
<comment type="subcellular location">
    <subcellularLocation>
        <location evidence="3">Membrane</location>
        <topology evidence="3">Multi-pass membrane protein</topology>
    </subcellularLocation>
</comment>
<comment type="similarity">
    <text evidence="3">Belongs to the UPF0496 family.</text>
</comment>
<sequence length="428" mass="47503">MGNRHGIMRPRRLASGRSAAAAEEEGEDGEGEPGSYEAACSADPELGTFDTALRRRASRAITAVASGVEVRSLSLGSLREVTGCLLDMNQEVVRVVLACKRDVWRSPDLFDLVEDYFEGSLHTLDFLAALDKSLHRARDSQLVLHLAVQRHHHEPPAAAAASASELYASTLGELRQFKAAGEPFTDEFFAAFQTVYRQQMSMVGKLRRRKRRLDRRLRSVRVWRRVSGIVFLTAFAALLVCSVVAAAIAAPPVAAALAPAASMPVGSAGKWMDSLLKKYQDALHGHKEVVSAMQVGTFIAIKDLDSIRVLVEHLEVQISSMADSVEFAERDEEAVRFGIDEVKKKLELFMKSVDDLGEQADRNNMRLCHILPEYVFFINPANGNGMSESLFEMMNAFHDICRKDIKFKTSHYYLNFLSSSYQVYIAVA</sequence>
<evidence type="ECO:0000255" key="1"/>
<evidence type="ECO:0000256" key="2">
    <source>
        <dbReference type="SAM" id="MobiDB-lite"/>
    </source>
</evidence>
<evidence type="ECO:0000305" key="3"/>
<organism>
    <name type="scientific">Oryza sativa subsp. indica</name>
    <name type="common">Rice</name>
    <dbReference type="NCBI Taxonomy" id="39946"/>
    <lineage>
        <taxon>Eukaryota</taxon>
        <taxon>Viridiplantae</taxon>
        <taxon>Streptophyta</taxon>
        <taxon>Embryophyta</taxon>
        <taxon>Tracheophyta</taxon>
        <taxon>Spermatophyta</taxon>
        <taxon>Magnoliopsida</taxon>
        <taxon>Liliopsida</taxon>
        <taxon>Poales</taxon>
        <taxon>Poaceae</taxon>
        <taxon>BOP clade</taxon>
        <taxon>Oryzoideae</taxon>
        <taxon>Oryzeae</taxon>
        <taxon>Oryzinae</taxon>
        <taxon>Oryza</taxon>
        <taxon>Oryza sativa</taxon>
    </lineage>
</organism>
<name>U496E_ORYSI</name>
<feature type="chain" id="PRO_0000306912" description="Putative UPF0496 protein 5">
    <location>
        <begin position="1"/>
        <end position="428"/>
    </location>
</feature>
<feature type="transmembrane region" description="Helical" evidence="1">
    <location>
        <begin position="229"/>
        <end position="249"/>
    </location>
</feature>
<feature type="transmembrane region" description="Helical" evidence="1">
    <location>
        <begin position="252"/>
        <end position="272"/>
    </location>
</feature>
<feature type="region of interest" description="Disordered" evidence="2">
    <location>
        <begin position="1"/>
        <end position="40"/>
    </location>
</feature>
<feature type="compositionally biased region" description="Basic residues" evidence="2">
    <location>
        <begin position="1"/>
        <end position="14"/>
    </location>
</feature>
<feature type="compositionally biased region" description="Acidic residues" evidence="2">
    <location>
        <begin position="22"/>
        <end position="31"/>
    </location>
</feature>
<proteinExistence type="inferred from homology"/>
<reference key="1">
    <citation type="journal article" date="2005" name="PLoS Biol.">
        <title>The genomes of Oryza sativa: a history of duplications.</title>
        <authorList>
            <person name="Yu J."/>
            <person name="Wang J."/>
            <person name="Lin W."/>
            <person name="Li S."/>
            <person name="Li H."/>
            <person name="Zhou J."/>
            <person name="Ni P."/>
            <person name="Dong W."/>
            <person name="Hu S."/>
            <person name="Zeng C."/>
            <person name="Zhang J."/>
            <person name="Zhang Y."/>
            <person name="Li R."/>
            <person name="Xu Z."/>
            <person name="Li S."/>
            <person name="Li X."/>
            <person name="Zheng H."/>
            <person name="Cong L."/>
            <person name="Lin L."/>
            <person name="Yin J."/>
            <person name="Geng J."/>
            <person name="Li G."/>
            <person name="Shi J."/>
            <person name="Liu J."/>
            <person name="Lv H."/>
            <person name="Li J."/>
            <person name="Wang J."/>
            <person name="Deng Y."/>
            <person name="Ran L."/>
            <person name="Shi X."/>
            <person name="Wang X."/>
            <person name="Wu Q."/>
            <person name="Li C."/>
            <person name="Ren X."/>
            <person name="Wang J."/>
            <person name="Wang X."/>
            <person name="Li D."/>
            <person name="Liu D."/>
            <person name="Zhang X."/>
            <person name="Ji Z."/>
            <person name="Zhao W."/>
            <person name="Sun Y."/>
            <person name="Zhang Z."/>
            <person name="Bao J."/>
            <person name="Han Y."/>
            <person name="Dong L."/>
            <person name="Ji J."/>
            <person name="Chen P."/>
            <person name="Wu S."/>
            <person name="Liu J."/>
            <person name="Xiao Y."/>
            <person name="Bu D."/>
            <person name="Tan J."/>
            <person name="Yang L."/>
            <person name="Ye C."/>
            <person name="Zhang J."/>
            <person name="Xu J."/>
            <person name="Zhou Y."/>
            <person name="Yu Y."/>
            <person name="Zhang B."/>
            <person name="Zhuang S."/>
            <person name="Wei H."/>
            <person name="Liu B."/>
            <person name="Lei M."/>
            <person name="Yu H."/>
            <person name="Li Y."/>
            <person name="Xu H."/>
            <person name="Wei S."/>
            <person name="He X."/>
            <person name="Fang L."/>
            <person name="Zhang Z."/>
            <person name="Zhang Y."/>
            <person name="Huang X."/>
            <person name="Su Z."/>
            <person name="Tong W."/>
            <person name="Li J."/>
            <person name="Tong Z."/>
            <person name="Li S."/>
            <person name="Ye J."/>
            <person name="Wang L."/>
            <person name="Fang L."/>
            <person name="Lei T."/>
            <person name="Chen C.-S."/>
            <person name="Chen H.-C."/>
            <person name="Xu Z."/>
            <person name="Li H."/>
            <person name="Huang H."/>
            <person name="Zhang F."/>
            <person name="Xu H."/>
            <person name="Li N."/>
            <person name="Zhao C."/>
            <person name="Li S."/>
            <person name="Dong L."/>
            <person name="Huang Y."/>
            <person name="Li L."/>
            <person name="Xi Y."/>
            <person name="Qi Q."/>
            <person name="Li W."/>
            <person name="Zhang B."/>
            <person name="Hu W."/>
            <person name="Zhang Y."/>
            <person name="Tian X."/>
            <person name="Jiao Y."/>
            <person name="Liang X."/>
            <person name="Jin J."/>
            <person name="Gao L."/>
            <person name="Zheng W."/>
            <person name="Hao B."/>
            <person name="Liu S.-M."/>
            <person name="Wang W."/>
            <person name="Yuan L."/>
            <person name="Cao M."/>
            <person name="McDermott J."/>
            <person name="Samudrala R."/>
            <person name="Wang J."/>
            <person name="Wong G.K.-S."/>
            <person name="Yang H."/>
        </authorList>
    </citation>
    <scope>NUCLEOTIDE SEQUENCE [LARGE SCALE GENOMIC DNA]</scope>
    <source>
        <strain>cv. 93-11</strain>
    </source>
</reference>
<protein>
    <recommendedName>
        <fullName>Putative UPF0496 protein 5</fullName>
    </recommendedName>
</protein>